<accession>A2BQW4</accession>
<keyword id="KW-0143">Chaperone</keyword>
<keyword id="KW-0963">Cytoplasm</keyword>
<keyword id="KW-0533">Nickel</keyword>
<keyword id="KW-0996">Nickel insertion</keyword>
<dbReference type="EMBL" id="CP000551">
    <property type="protein sequence ID" value="ABM70175.1"/>
    <property type="molecule type" value="Genomic_DNA"/>
</dbReference>
<dbReference type="RefSeq" id="WP_011818332.1">
    <property type="nucleotide sequence ID" value="NC_008816.1"/>
</dbReference>
<dbReference type="SMR" id="A2BQW4"/>
<dbReference type="STRING" id="146891.A9601_08911"/>
<dbReference type="KEGG" id="pmb:A9601_08911"/>
<dbReference type="eggNOG" id="COG2371">
    <property type="taxonomic scope" value="Bacteria"/>
</dbReference>
<dbReference type="HOGENOM" id="CLU_093757_2_0_3"/>
<dbReference type="OrthoDB" id="5421304at2"/>
<dbReference type="Proteomes" id="UP000002590">
    <property type="component" value="Chromosome"/>
</dbReference>
<dbReference type="GO" id="GO:0005737">
    <property type="term" value="C:cytoplasm"/>
    <property type="evidence" value="ECO:0007669"/>
    <property type="project" value="UniProtKB-SubCell"/>
</dbReference>
<dbReference type="GO" id="GO:0016151">
    <property type="term" value="F:nickel cation binding"/>
    <property type="evidence" value="ECO:0007669"/>
    <property type="project" value="UniProtKB-UniRule"/>
</dbReference>
<dbReference type="GO" id="GO:0051082">
    <property type="term" value="F:unfolded protein binding"/>
    <property type="evidence" value="ECO:0007669"/>
    <property type="project" value="UniProtKB-UniRule"/>
</dbReference>
<dbReference type="GO" id="GO:0006457">
    <property type="term" value="P:protein folding"/>
    <property type="evidence" value="ECO:0007669"/>
    <property type="project" value="InterPro"/>
</dbReference>
<dbReference type="GO" id="GO:0065003">
    <property type="term" value="P:protein-containing complex assembly"/>
    <property type="evidence" value="ECO:0007669"/>
    <property type="project" value="InterPro"/>
</dbReference>
<dbReference type="GO" id="GO:0019627">
    <property type="term" value="P:urea metabolic process"/>
    <property type="evidence" value="ECO:0007669"/>
    <property type="project" value="InterPro"/>
</dbReference>
<dbReference type="CDD" id="cd00571">
    <property type="entry name" value="UreE"/>
    <property type="match status" value="1"/>
</dbReference>
<dbReference type="Gene3D" id="2.60.260.20">
    <property type="entry name" value="Urease metallochaperone UreE, N-terminal domain"/>
    <property type="match status" value="1"/>
</dbReference>
<dbReference type="Gene3D" id="3.30.70.790">
    <property type="entry name" value="UreE, C-terminal domain"/>
    <property type="match status" value="1"/>
</dbReference>
<dbReference type="HAMAP" id="MF_00822">
    <property type="entry name" value="UreE"/>
    <property type="match status" value="1"/>
</dbReference>
<dbReference type="InterPro" id="IPR012406">
    <property type="entry name" value="UreE"/>
</dbReference>
<dbReference type="InterPro" id="IPR007864">
    <property type="entry name" value="UreE_C_dom"/>
</dbReference>
<dbReference type="InterPro" id="IPR004029">
    <property type="entry name" value="UreE_N"/>
</dbReference>
<dbReference type="InterPro" id="IPR036118">
    <property type="entry name" value="UreE_N_sf"/>
</dbReference>
<dbReference type="NCBIfam" id="NF009756">
    <property type="entry name" value="PRK13261.2-2"/>
    <property type="match status" value="1"/>
</dbReference>
<dbReference type="Pfam" id="PF05194">
    <property type="entry name" value="UreE_C"/>
    <property type="match status" value="1"/>
</dbReference>
<dbReference type="PIRSF" id="PIRSF036402">
    <property type="entry name" value="Ureas_acces_UreE"/>
    <property type="match status" value="1"/>
</dbReference>
<dbReference type="SMART" id="SM00988">
    <property type="entry name" value="UreE_N"/>
    <property type="match status" value="1"/>
</dbReference>
<dbReference type="SUPFAM" id="SSF69737">
    <property type="entry name" value="Urease metallochaperone UreE, C-terminal domain"/>
    <property type="match status" value="1"/>
</dbReference>
<dbReference type="SUPFAM" id="SSF69287">
    <property type="entry name" value="Urease metallochaperone UreE, N-terminal domain"/>
    <property type="match status" value="1"/>
</dbReference>
<protein>
    <recommendedName>
        <fullName evidence="1">Urease accessory protein UreE</fullName>
    </recommendedName>
</protein>
<sequence length="149" mass="17295">MRMNKQIVVTDWIKEKPKLGLFLKLTLSSDERRILRGKRLTDCDQEIILQLPRNGKLNDGDILSTNESNFYVEIIAKTEDLIEISSNSKIELIKTAYHLGNRHVEVEIEEGILLTKSDYVIKNMLLNFKVNVKNTKKKFFPERGAHSHE</sequence>
<proteinExistence type="inferred from homology"/>
<gene>
    <name evidence="1" type="primary">ureE</name>
    <name type="ordered locus">A9601_08911</name>
</gene>
<organism>
    <name type="scientific">Prochlorococcus marinus (strain AS9601)</name>
    <dbReference type="NCBI Taxonomy" id="146891"/>
    <lineage>
        <taxon>Bacteria</taxon>
        <taxon>Bacillati</taxon>
        <taxon>Cyanobacteriota</taxon>
        <taxon>Cyanophyceae</taxon>
        <taxon>Synechococcales</taxon>
        <taxon>Prochlorococcaceae</taxon>
        <taxon>Prochlorococcus</taxon>
    </lineage>
</organism>
<name>UREE_PROMS</name>
<comment type="function">
    <text evidence="1">Involved in urease metallocenter assembly. Binds nickel. Probably functions as a nickel donor during metallocenter assembly.</text>
</comment>
<comment type="subcellular location">
    <subcellularLocation>
        <location evidence="1">Cytoplasm</location>
    </subcellularLocation>
</comment>
<comment type="similarity">
    <text evidence="1">Belongs to the UreE family.</text>
</comment>
<evidence type="ECO:0000255" key="1">
    <source>
        <dbReference type="HAMAP-Rule" id="MF_00822"/>
    </source>
</evidence>
<feature type="chain" id="PRO_1000062553" description="Urease accessory protein UreE">
    <location>
        <begin position="1"/>
        <end position="149"/>
    </location>
</feature>
<reference key="1">
    <citation type="journal article" date="2007" name="PLoS Genet.">
        <title>Patterns and implications of gene gain and loss in the evolution of Prochlorococcus.</title>
        <authorList>
            <person name="Kettler G.C."/>
            <person name="Martiny A.C."/>
            <person name="Huang K."/>
            <person name="Zucker J."/>
            <person name="Coleman M.L."/>
            <person name="Rodrigue S."/>
            <person name="Chen F."/>
            <person name="Lapidus A."/>
            <person name="Ferriera S."/>
            <person name="Johnson J."/>
            <person name="Steglich C."/>
            <person name="Church G.M."/>
            <person name="Richardson P."/>
            <person name="Chisholm S.W."/>
        </authorList>
    </citation>
    <scope>NUCLEOTIDE SEQUENCE [LARGE SCALE GENOMIC DNA]</scope>
    <source>
        <strain>AS9601</strain>
    </source>
</reference>